<dbReference type="EC" id="2.1.3.15" evidence="1"/>
<dbReference type="EMBL" id="BX294155">
    <property type="protein sequence ID" value="CAD77847.1"/>
    <property type="molecule type" value="Genomic_DNA"/>
</dbReference>
<dbReference type="RefSeq" id="NP_870770.1">
    <property type="nucleotide sequence ID" value="NC_005027.1"/>
</dbReference>
<dbReference type="RefSeq" id="WP_007327662.1">
    <property type="nucleotide sequence ID" value="NC_005027.1"/>
</dbReference>
<dbReference type="SMR" id="Q7UHX0"/>
<dbReference type="FunCoup" id="Q7UHX0">
    <property type="interactions" value="410"/>
</dbReference>
<dbReference type="STRING" id="243090.RB12904"/>
<dbReference type="EnsemblBacteria" id="CAD77847">
    <property type="protein sequence ID" value="CAD77847"/>
    <property type="gene ID" value="RB12904"/>
</dbReference>
<dbReference type="KEGG" id="rba:RB12904"/>
<dbReference type="PATRIC" id="fig|243090.15.peg.6254"/>
<dbReference type="eggNOG" id="COG0777">
    <property type="taxonomic scope" value="Bacteria"/>
</dbReference>
<dbReference type="HOGENOM" id="CLU_015486_1_1_0"/>
<dbReference type="InParanoid" id="Q7UHX0"/>
<dbReference type="OrthoDB" id="9772975at2"/>
<dbReference type="UniPathway" id="UPA00655">
    <property type="reaction ID" value="UER00711"/>
</dbReference>
<dbReference type="Proteomes" id="UP000001025">
    <property type="component" value="Chromosome"/>
</dbReference>
<dbReference type="GO" id="GO:0009317">
    <property type="term" value="C:acetyl-CoA carboxylase complex"/>
    <property type="evidence" value="ECO:0007669"/>
    <property type="project" value="InterPro"/>
</dbReference>
<dbReference type="GO" id="GO:0003989">
    <property type="term" value="F:acetyl-CoA carboxylase activity"/>
    <property type="evidence" value="ECO:0007669"/>
    <property type="project" value="InterPro"/>
</dbReference>
<dbReference type="GO" id="GO:0005524">
    <property type="term" value="F:ATP binding"/>
    <property type="evidence" value="ECO:0007669"/>
    <property type="project" value="UniProtKB-KW"/>
</dbReference>
<dbReference type="GO" id="GO:0016743">
    <property type="term" value="F:carboxyl- or carbamoyltransferase activity"/>
    <property type="evidence" value="ECO:0007669"/>
    <property type="project" value="UniProtKB-UniRule"/>
</dbReference>
<dbReference type="GO" id="GO:0008270">
    <property type="term" value="F:zinc ion binding"/>
    <property type="evidence" value="ECO:0007669"/>
    <property type="project" value="UniProtKB-UniRule"/>
</dbReference>
<dbReference type="GO" id="GO:0006633">
    <property type="term" value="P:fatty acid biosynthetic process"/>
    <property type="evidence" value="ECO:0000318"/>
    <property type="project" value="GO_Central"/>
</dbReference>
<dbReference type="GO" id="GO:2001295">
    <property type="term" value="P:malonyl-CoA biosynthetic process"/>
    <property type="evidence" value="ECO:0007669"/>
    <property type="project" value="UniProtKB-UniRule"/>
</dbReference>
<dbReference type="Gene3D" id="3.90.226.10">
    <property type="entry name" value="2-enoyl-CoA Hydratase, Chain A, domain 1"/>
    <property type="match status" value="1"/>
</dbReference>
<dbReference type="HAMAP" id="MF_01395">
    <property type="entry name" value="AcetylCoA_CT_beta"/>
    <property type="match status" value="1"/>
</dbReference>
<dbReference type="InterPro" id="IPR034733">
    <property type="entry name" value="AcCoA_carboxyl_beta"/>
</dbReference>
<dbReference type="InterPro" id="IPR000438">
    <property type="entry name" value="Acetyl_CoA_COase_Trfase_b_su"/>
</dbReference>
<dbReference type="InterPro" id="IPR029045">
    <property type="entry name" value="ClpP/crotonase-like_dom_sf"/>
</dbReference>
<dbReference type="InterPro" id="IPR011762">
    <property type="entry name" value="COA_CT_N"/>
</dbReference>
<dbReference type="InterPro" id="IPR041010">
    <property type="entry name" value="Znf-ACC"/>
</dbReference>
<dbReference type="NCBIfam" id="TIGR00515">
    <property type="entry name" value="accD"/>
    <property type="match status" value="1"/>
</dbReference>
<dbReference type="PANTHER" id="PTHR42995">
    <property type="entry name" value="ACETYL-COENZYME A CARBOXYLASE CARBOXYL TRANSFERASE SUBUNIT BETA, CHLOROPLASTIC"/>
    <property type="match status" value="1"/>
</dbReference>
<dbReference type="PANTHER" id="PTHR42995:SF5">
    <property type="entry name" value="ACETYL-COENZYME A CARBOXYLASE CARBOXYL TRANSFERASE SUBUNIT BETA, CHLOROPLASTIC"/>
    <property type="match status" value="1"/>
</dbReference>
<dbReference type="Pfam" id="PF01039">
    <property type="entry name" value="Carboxyl_trans"/>
    <property type="match status" value="1"/>
</dbReference>
<dbReference type="Pfam" id="PF17848">
    <property type="entry name" value="Zn_ribbon_ACC"/>
    <property type="match status" value="1"/>
</dbReference>
<dbReference type="PRINTS" id="PR01070">
    <property type="entry name" value="ACCCTRFRASEB"/>
</dbReference>
<dbReference type="SUPFAM" id="SSF52096">
    <property type="entry name" value="ClpP/crotonase"/>
    <property type="match status" value="1"/>
</dbReference>
<dbReference type="PROSITE" id="PS50980">
    <property type="entry name" value="COA_CT_NTER"/>
    <property type="match status" value="1"/>
</dbReference>
<feature type="chain" id="PRO_0000389832" description="Acetyl-coenzyme A carboxylase carboxyl transferase subunit beta">
    <location>
        <begin position="1"/>
        <end position="312"/>
    </location>
</feature>
<feature type="domain" description="CoA carboxyltransferase N-terminal" evidence="2">
    <location>
        <begin position="55"/>
        <end position="312"/>
    </location>
</feature>
<feature type="zinc finger region" description="C4-type" evidence="1">
    <location>
        <begin position="59"/>
        <end position="81"/>
    </location>
</feature>
<feature type="region of interest" description="Disordered" evidence="3">
    <location>
        <begin position="1"/>
        <end position="52"/>
    </location>
</feature>
<feature type="compositionally biased region" description="Low complexity" evidence="3">
    <location>
        <begin position="18"/>
        <end position="32"/>
    </location>
</feature>
<feature type="binding site" evidence="1">
    <location>
        <position position="59"/>
    </location>
    <ligand>
        <name>Zn(2+)</name>
        <dbReference type="ChEBI" id="CHEBI:29105"/>
    </ligand>
</feature>
<feature type="binding site" evidence="1">
    <location>
        <position position="62"/>
    </location>
    <ligand>
        <name>Zn(2+)</name>
        <dbReference type="ChEBI" id="CHEBI:29105"/>
    </ligand>
</feature>
<feature type="binding site" evidence="1">
    <location>
        <position position="78"/>
    </location>
    <ligand>
        <name>Zn(2+)</name>
        <dbReference type="ChEBI" id="CHEBI:29105"/>
    </ligand>
</feature>
<feature type="binding site" evidence="1">
    <location>
        <position position="81"/>
    </location>
    <ligand>
        <name>Zn(2+)</name>
        <dbReference type="ChEBI" id="CHEBI:29105"/>
    </ligand>
</feature>
<sequence length="312" mass="33739">MEMDTAVENPAVEKNGQPTPSSTSTATDAAPTPNAPNRPAPNTAGNRKRGVPEGVWRKCDSCGASLFYKEVQQRLNVCPQCDHHFYVSAWERVAQVLDDGTFEPMNEHLRPTDPLEFRDRRSYAERLVGEQKRTGLTDAVLTGTGMIRARRVAFAVTDSAFIMGSMGSVVGERLTRLIERATEQNLALIIISASGGGARMHEGILSLMQMAKVSAALSRYHAAGGLFISVLTNPTMGGVAASFASLGDLVFAEPKALIGFAGPRTIKATIGIELPEGFQTSEFLLEHGYIDRIVHRKSLKTEIATAIDYCGK</sequence>
<protein>
    <recommendedName>
        <fullName evidence="1">Acetyl-coenzyme A carboxylase carboxyl transferase subunit beta</fullName>
        <shortName evidence="1">ACCase subunit beta</shortName>
        <shortName evidence="1">Acetyl-CoA carboxylase carboxyltransferase subunit beta</shortName>
        <ecNumber evidence="1">2.1.3.15</ecNumber>
    </recommendedName>
</protein>
<name>ACCD_RHOBA</name>
<evidence type="ECO:0000255" key="1">
    <source>
        <dbReference type="HAMAP-Rule" id="MF_01395"/>
    </source>
</evidence>
<evidence type="ECO:0000255" key="2">
    <source>
        <dbReference type="PROSITE-ProRule" id="PRU01136"/>
    </source>
</evidence>
<evidence type="ECO:0000256" key="3">
    <source>
        <dbReference type="SAM" id="MobiDB-lite"/>
    </source>
</evidence>
<gene>
    <name evidence="1" type="primary">accD</name>
    <name type="ordered locus">RB12904</name>
</gene>
<keyword id="KW-0067">ATP-binding</keyword>
<keyword id="KW-0963">Cytoplasm</keyword>
<keyword id="KW-0275">Fatty acid biosynthesis</keyword>
<keyword id="KW-0276">Fatty acid metabolism</keyword>
<keyword id="KW-0444">Lipid biosynthesis</keyword>
<keyword id="KW-0443">Lipid metabolism</keyword>
<keyword id="KW-0479">Metal-binding</keyword>
<keyword id="KW-0547">Nucleotide-binding</keyword>
<keyword id="KW-1185">Reference proteome</keyword>
<keyword id="KW-0808">Transferase</keyword>
<keyword id="KW-0862">Zinc</keyword>
<keyword id="KW-0863">Zinc-finger</keyword>
<comment type="function">
    <text evidence="1">Component of the acetyl coenzyme A carboxylase (ACC) complex. Biotin carboxylase (BC) catalyzes the carboxylation of biotin on its carrier protein (BCCP) and then the CO(2) group is transferred by the transcarboxylase to acetyl-CoA to form malonyl-CoA.</text>
</comment>
<comment type="catalytic activity">
    <reaction evidence="1">
        <text>N(6)-carboxybiotinyl-L-lysyl-[protein] + acetyl-CoA = N(6)-biotinyl-L-lysyl-[protein] + malonyl-CoA</text>
        <dbReference type="Rhea" id="RHEA:54728"/>
        <dbReference type="Rhea" id="RHEA-COMP:10505"/>
        <dbReference type="Rhea" id="RHEA-COMP:10506"/>
        <dbReference type="ChEBI" id="CHEBI:57288"/>
        <dbReference type="ChEBI" id="CHEBI:57384"/>
        <dbReference type="ChEBI" id="CHEBI:83144"/>
        <dbReference type="ChEBI" id="CHEBI:83145"/>
        <dbReference type="EC" id="2.1.3.15"/>
    </reaction>
</comment>
<comment type="cofactor">
    <cofactor evidence="1">
        <name>Zn(2+)</name>
        <dbReference type="ChEBI" id="CHEBI:29105"/>
    </cofactor>
    <text evidence="1">Binds 1 zinc ion per subunit.</text>
</comment>
<comment type="pathway">
    <text evidence="1">Lipid metabolism; malonyl-CoA biosynthesis; malonyl-CoA from acetyl-CoA: step 1/1.</text>
</comment>
<comment type="subunit">
    <text evidence="1">Acetyl-CoA carboxylase is a heterohexamer composed of biotin carboxyl carrier protein (AccB), biotin carboxylase (AccC) and two subunits each of ACCase subunit alpha (AccA) and ACCase subunit beta (AccD).</text>
</comment>
<comment type="subcellular location">
    <subcellularLocation>
        <location evidence="1">Cytoplasm</location>
    </subcellularLocation>
</comment>
<comment type="similarity">
    <text evidence="1">Belongs to the AccD/PCCB family.</text>
</comment>
<accession>Q7UHX0</accession>
<organism>
    <name type="scientific">Rhodopirellula baltica (strain DSM 10527 / NCIMB 13988 / SH1)</name>
    <dbReference type="NCBI Taxonomy" id="243090"/>
    <lineage>
        <taxon>Bacteria</taxon>
        <taxon>Pseudomonadati</taxon>
        <taxon>Planctomycetota</taxon>
        <taxon>Planctomycetia</taxon>
        <taxon>Pirellulales</taxon>
        <taxon>Pirellulaceae</taxon>
        <taxon>Rhodopirellula</taxon>
    </lineage>
</organism>
<proteinExistence type="inferred from homology"/>
<reference key="1">
    <citation type="journal article" date="2003" name="Proc. Natl. Acad. Sci. U.S.A.">
        <title>Complete genome sequence of the marine planctomycete Pirellula sp. strain 1.</title>
        <authorList>
            <person name="Gloeckner F.O."/>
            <person name="Kube M."/>
            <person name="Bauer M."/>
            <person name="Teeling H."/>
            <person name="Lombardot T."/>
            <person name="Ludwig W."/>
            <person name="Gade D."/>
            <person name="Beck A."/>
            <person name="Borzym K."/>
            <person name="Heitmann K."/>
            <person name="Rabus R."/>
            <person name="Schlesner H."/>
            <person name="Amann R."/>
            <person name="Reinhardt R."/>
        </authorList>
    </citation>
    <scope>NUCLEOTIDE SEQUENCE [LARGE SCALE GENOMIC DNA]</scope>
    <source>
        <strain>DSM 10527 / NCIMB 13988 / SH1</strain>
    </source>
</reference>